<protein>
    <recommendedName>
        <fullName evidence="1">Protein SlyX homolog</fullName>
    </recommendedName>
</protein>
<reference key="1">
    <citation type="submission" date="2006-01" db="EMBL/GenBank/DDBJ databases">
        <title>Complete sequence of Rhodopseudomonas palustris HaA2.</title>
        <authorList>
            <consortium name="US DOE Joint Genome Institute"/>
            <person name="Copeland A."/>
            <person name="Lucas S."/>
            <person name="Lapidus A."/>
            <person name="Barry K."/>
            <person name="Detter J.C."/>
            <person name="Glavina T."/>
            <person name="Hammon N."/>
            <person name="Israni S."/>
            <person name="Pitluck S."/>
            <person name="Chain P."/>
            <person name="Malfatti S."/>
            <person name="Shin M."/>
            <person name="Vergez L."/>
            <person name="Schmutz J."/>
            <person name="Larimer F."/>
            <person name="Land M."/>
            <person name="Hauser L."/>
            <person name="Pelletier D.A."/>
            <person name="Kyrpides N."/>
            <person name="Anderson I."/>
            <person name="Oda Y."/>
            <person name="Harwood C.S."/>
            <person name="Richardson P."/>
        </authorList>
    </citation>
    <scope>NUCLEOTIDE SEQUENCE [LARGE SCALE GENOMIC DNA]</scope>
    <source>
        <strain>HaA2</strain>
    </source>
</reference>
<gene>
    <name evidence="1" type="primary">slyX</name>
    <name type="ordered locus">RPB_4228</name>
</gene>
<name>SLYX_RHOP2</name>
<accession>Q2IS91</accession>
<keyword id="KW-1185">Reference proteome</keyword>
<dbReference type="EMBL" id="CP000250">
    <property type="protein sequence ID" value="ABD08919.1"/>
    <property type="molecule type" value="Genomic_DNA"/>
</dbReference>
<dbReference type="RefSeq" id="WP_011443103.1">
    <property type="nucleotide sequence ID" value="NC_007778.1"/>
</dbReference>
<dbReference type="SMR" id="Q2IS91"/>
<dbReference type="STRING" id="316058.RPB_4228"/>
<dbReference type="KEGG" id="rpb:RPB_4228"/>
<dbReference type="eggNOG" id="COG2900">
    <property type="taxonomic scope" value="Bacteria"/>
</dbReference>
<dbReference type="HOGENOM" id="CLU_180796_5_3_5"/>
<dbReference type="OrthoDB" id="5422806at2"/>
<dbReference type="Proteomes" id="UP000008809">
    <property type="component" value="Chromosome"/>
</dbReference>
<dbReference type="Gene3D" id="1.20.5.300">
    <property type="match status" value="1"/>
</dbReference>
<dbReference type="HAMAP" id="MF_00715">
    <property type="entry name" value="SlyX"/>
    <property type="match status" value="1"/>
</dbReference>
<dbReference type="InterPro" id="IPR007236">
    <property type="entry name" value="SlyX"/>
</dbReference>
<dbReference type="PANTHER" id="PTHR36508">
    <property type="entry name" value="PROTEIN SLYX"/>
    <property type="match status" value="1"/>
</dbReference>
<dbReference type="PANTHER" id="PTHR36508:SF1">
    <property type="entry name" value="PROTEIN SLYX"/>
    <property type="match status" value="1"/>
</dbReference>
<dbReference type="Pfam" id="PF04102">
    <property type="entry name" value="SlyX"/>
    <property type="match status" value="1"/>
</dbReference>
<feature type="chain" id="PRO_1000045729" description="Protein SlyX homolog">
    <location>
        <begin position="1"/>
        <end position="71"/>
    </location>
</feature>
<comment type="similarity">
    <text evidence="1">Belongs to the SlyX family.</text>
</comment>
<organism>
    <name type="scientific">Rhodopseudomonas palustris (strain HaA2)</name>
    <dbReference type="NCBI Taxonomy" id="316058"/>
    <lineage>
        <taxon>Bacteria</taxon>
        <taxon>Pseudomonadati</taxon>
        <taxon>Pseudomonadota</taxon>
        <taxon>Alphaproteobacteria</taxon>
        <taxon>Hyphomicrobiales</taxon>
        <taxon>Nitrobacteraceae</taxon>
        <taxon>Rhodopseudomonas</taxon>
    </lineage>
</organism>
<proteinExistence type="inferred from homology"/>
<evidence type="ECO:0000255" key="1">
    <source>
        <dbReference type="HAMAP-Rule" id="MF_00715"/>
    </source>
</evidence>
<sequence>MADDQSLSARIEALEMRLTYQDETIETLNQAVTAQWQQIDALTRQIAALSDRLAQAETSVAAPANERPPHY</sequence>